<evidence type="ECO:0000255" key="1">
    <source>
        <dbReference type="HAMAP-Rule" id="MF_01022"/>
    </source>
</evidence>
<gene>
    <name evidence="1" type="primary">hisB</name>
    <name type="ordered locus">b2022</name>
    <name type="ordered locus">JW2004</name>
</gene>
<comment type="catalytic activity">
    <reaction evidence="1">
        <text>D-erythro-1-(imidazol-4-yl)glycerol 3-phosphate = 3-(imidazol-4-yl)-2-oxopropyl phosphate + H2O</text>
        <dbReference type="Rhea" id="RHEA:11040"/>
        <dbReference type="ChEBI" id="CHEBI:15377"/>
        <dbReference type="ChEBI" id="CHEBI:57766"/>
        <dbReference type="ChEBI" id="CHEBI:58278"/>
        <dbReference type="EC" id="4.2.1.19"/>
    </reaction>
</comment>
<comment type="catalytic activity">
    <reaction evidence="1">
        <text>L-histidinol phosphate + H2O = L-histidinol + phosphate</text>
        <dbReference type="Rhea" id="RHEA:14465"/>
        <dbReference type="ChEBI" id="CHEBI:15377"/>
        <dbReference type="ChEBI" id="CHEBI:43474"/>
        <dbReference type="ChEBI" id="CHEBI:57699"/>
        <dbReference type="ChEBI" id="CHEBI:57980"/>
        <dbReference type="EC" id="3.1.3.15"/>
    </reaction>
</comment>
<comment type="cofactor">
    <cofactor evidence="1">
        <name>Mg(2+)</name>
        <dbReference type="ChEBI" id="CHEBI:18420"/>
    </cofactor>
</comment>
<comment type="cofactor">
    <cofactor evidence="1">
        <name>Zn(2+)</name>
        <dbReference type="ChEBI" id="CHEBI:29105"/>
    </cofactor>
</comment>
<comment type="pathway">
    <text evidence="1">Amino-acid biosynthesis; L-histidine biosynthesis; L-histidine from 5-phospho-alpha-D-ribose 1-diphosphate: step 6/9.</text>
</comment>
<comment type="pathway">
    <text evidence="1">Amino-acid biosynthesis; L-histidine biosynthesis; L-histidine from 5-phospho-alpha-D-ribose 1-diphosphate: step 8/9.</text>
</comment>
<comment type="interaction">
    <interactant intactId="EBI-1126930">
        <id>P06987</id>
    </interactant>
    <interactant intactId="EBI-1120568">
        <id>P0ACA7</id>
        <label>gstB</label>
    </interactant>
    <organismsDiffer>false</organismsDiffer>
    <experiments>4</experiments>
</comment>
<comment type="interaction">
    <interactant intactId="EBI-1126930">
        <id>P06987</id>
    </interactant>
    <interactant intactId="EBI-1126930">
        <id>P06987</id>
        <label>hisB</label>
    </interactant>
    <organismsDiffer>false</organismsDiffer>
    <experiments>3</experiments>
</comment>
<comment type="subcellular location">
    <subcellularLocation>
        <location evidence="1">Cytoplasm</location>
    </subcellularLocation>
</comment>
<comment type="similarity">
    <text evidence="1">In the N-terminal section; belongs to the histidinol-phosphatase family.</text>
</comment>
<comment type="similarity">
    <text evidence="1">In the C-terminal section; belongs to the imidazoleglycerol-phosphate dehydratase family.</text>
</comment>
<dbReference type="EC" id="3.1.3.15" evidence="1"/>
<dbReference type="EC" id="4.2.1.19" evidence="1"/>
<dbReference type="EMBL" id="X03416">
    <property type="protein sequence ID" value="CAA27151.1"/>
    <property type="molecule type" value="Genomic_DNA"/>
</dbReference>
<dbReference type="EMBL" id="X13462">
    <property type="protein sequence ID" value="CAA31814.1"/>
    <property type="molecule type" value="Genomic_DNA"/>
</dbReference>
<dbReference type="EMBL" id="U00096">
    <property type="protein sequence ID" value="AAC75083.2"/>
    <property type="molecule type" value="Genomic_DNA"/>
</dbReference>
<dbReference type="EMBL" id="AP009048">
    <property type="protein sequence ID" value="BAA15853.1"/>
    <property type="molecule type" value="Genomic_DNA"/>
</dbReference>
<dbReference type="PIR" id="E64967">
    <property type="entry name" value="DWECHB"/>
</dbReference>
<dbReference type="RefSeq" id="NP_416526.4">
    <property type="nucleotide sequence ID" value="NC_000913.3"/>
</dbReference>
<dbReference type="RefSeq" id="WP_000080105.1">
    <property type="nucleotide sequence ID" value="NZ_LN832404.1"/>
</dbReference>
<dbReference type="SMR" id="P06987"/>
<dbReference type="BioGRID" id="4260405">
    <property type="interactions" value="21"/>
</dbReference>
<dbReference type="BioGRID" id="850899">
    <property type="interactions" value="3"/>
</dbReference>
<dbReference type="DIP" id="DIP-9901N"/>
<dbReference type="FunCoup" id="P06987">
    <property type="interactions" value="531"/>
</dbReference>
<dbReference type="IntAct" id="P06987">
    <property type="interactions" value="5"/>
</dbReference>
<dbReference type="STRING" id="511145.b2022"/>
<dbReference type="BindingDB" id="P06987"/>
<dbReference type="ChEMBL" id="CHEMBL2366452"/>
<dbReference type="jPOST" id="P06987"/>
<dbReference type="PaxDb" id="511145-b2022"/>
<dbReference type="EnsemblBacteria" id="AAC75083">
    <property type="protein sequence ID" value="AAC75083"/>
    <property type="gene ID" value="b2022"/>
</dbReference>
<dbReference type="GeneID" id="946552"/>
<dbReference type="KEGG" id="ecj:JW2004"/>
<dbReference type="KEGG" id="eco:b2022"/>
<dbReference type="KEGG" id="ecoc:C3026_11400"/>
<dbReference type="PATRIC" id="fig|1411691.4.peg.230"/>
<dbReference type="EchoBASE" id="EB0440"/>
<dbReference type="eggNOG" id="COG0131">
    <property type="taxonomic scope" value="Bacteria"/>
</dbReference>
<dbReference type="eggNOG" id="COG0241">
    <property type="taxonomic scope" value="Bacteria"/>
</dbReference>
<dbReference type="HOGENOM" id="CLU_044308_0_0_6"/>
<dbReference type="InParanoid" id="P06987"/>
<dbReference type="OMA" id="PEDTFWP"/>
<dbReference type="OrthoDB" id="9790411at2"/>
<dbReference type="PhylomeDB" id="P06987"/>
<dbReference type="BioCyc" id="EcoCyc:IMIDPHOSPHADEHYDHISTIDPHOSPHA-MONOMER"/>
<dbReference type="BioCyc" id="MetaCyc:IMIDPHOSPHADEHYDHISTIDPHOSPHA-MONOMER"/>
<dbReference type="UniPathway" id="UPA00031">
    <property type="reaction ID" value="UER00011"/>
</dbReference>
<dbReference type="UniPathway" id="UPA00031">
    <property type="reaction ID" value="UER00013"/>
</dbReference>
<dbReference type="PRO" id="PR:P06987"/>
<dbReference type="Proteomes" id="UP000000625">
    <property type="component" value="Chromosome"/>
</dbReference>
<dbReference type="GO" id="GO:0005737">
    <property type="term" value="C:cytoplasm"/>
    <property type="evidence" value="ECO:0007669"/>
    <property type="project" value="UniProtKB-SubCell"/>
</dbReference>
<dbReference type="GO" id="GO:0004401">
    <property type="term" value="F:histidinol-phosphatase activity"/>
    <property type="evidence" value="ECO:0000314"/>
    <property type="project" value="EcoCyc"/>
</dbReference>
<dbReference type="GO" id="GO:0042802">
    <property type="term" value="F:identical protein binding"/>
    <property type="evidence" value="ECO:0000353"/>
    <property type="project" value="IntAct"/>
</dbReference>
<dbReference type="GO" id="GO:0004424">
    <property type="term" value="F:imidazoleglycerol-phosphate dehydratase activity"/>
    <property type="evidence" value="ECO:0000318"/>
    <property type="project" value="GO_Central"/>
</dbReference>
<dbReference type="GO" id="GO:0046872">
    <property type="term" value="F:metal ion binding"/>
    <property type="evidence" value="ECO:0007669"/>
    <property type="project" value="UniProtKB-KW"/>
</dbReference>
<dbReference type="GO" id="GO:0000105">
    <property type="term" value="P:L-histidine biosynthetic process"/>
    <property type="evidence" value="ECO:0000318"/>
    <property type="project" value="GO_Central"/>
</dbReference>
<dbReference type="CDD" id="cd07503">
    <property type="entry name" value="HAD_HisB-N"/>
    <property type="match status" value="1"/>
</dbReference>
<dbReference type="CDD" id="cd07914">
    <property type="entry name" value="IGPD"/>
    <property type="match status" value="1"/>
</dbReference>
<dbReference type="FunFam" id="3.40.50.1000:FF:000061">
    <property type="entry name" value="Histidine biosynthesis bifunctional protein HisB"/>
    <property type="match status" value="1"/>
</dbReference>
<dbReference type="FunFam" id="3.30.230.40:FF:000001">
    <property type="entry name" value="Imidazoleglycerol-phosphate dehydratase HisB"/>
    <property type="match status" value="1"/>
</dbReference>
<dbReference type="FunFam" id="3.30.230.40:FF:000003">
    <property type="entry name" value="Imidazoleglycerol-phosphate dehydratase HisB"/>
    <property type="match status" value="1"/>
</dbReference>
<dbReference type="Gene3D" id="3.40.50.1000">
    <property type="entry name" value="HAD superfamily/HAD-like"/>
    <property type="match status" value="1"/>
</dbReference>
<dbReference type="Gene3D" id="3.30.230.40">
    <property type="entry name" value="Imidazole glycerol phosphate dehydratase, domain 1"/>
    <property type="match status" value="2"/>
</dbReference>
<dbReference type="HAMAP" id="MF_01022">
    <property type="entry name" value="Bifunc_HisB"/>
    <property type="match status" value="1"/>
</dbReference>
<dbReference type="HAMAP" id="MF_00076">
    <property type="entry name" value="HisB"/>
    <property type="match status" value="1"/>
</dbReference>
<dbReference type="InterPro" id="IPR036412">
    <property type="entry name" value="HAD-like_sf"/>
</dbReference>
<dbReference type="InterPro" id="IPR006549">
    <property type="entry name" value="HAD-SF_hydro_IIIA"/>
</dbReference>
<dbReference type="InterPro" id="IPR023214">
    <property type="entry name" value="HAD_sf"/>
</dbReference>
<dbReference type="InterPro" id="IPR020566">
    <property type="entry name" value="His_synth_bifunc_HisB"/>
</dbReference>
<dbReference type="InterPro" id="IPR005954">
    <property type="entry name" value="HisB_N"/>
</dbReference>
<dbReference type="InterPro" id="IPR006543">
    <property type="entry name" value="Histidinol-phos"/>
</dbReference>
<dbReference type="InterPro" id="IPR038494">
    <property type="entry name" value="IGPD_sf"/>
</dbReference>
<dbReference type="InterPro" id="IPR000807">
    <property type="entry name" value="ImidazoleglycerolP_deHydtase"/>
</dbReference>
<dbReference type="InterPro" id="IPR020565">
    <property type="entry name" value="ImidazoleglycerP_deHydtase_CS"/>
</dbReference>
<dbReference type="InterPro" id="IPR020568">
    <property type="entry name" value="Ribosomal_Su5_D2-typ_SF"/>
</dbReference>
<dbReference type="NCBIfam" id="TIGR01662">
    <property type="entry name" value="HAD-SF-IIIA"/>
    <property type="match status" value="1"/>
</dbReference>
<dbReference type="NCBIfam" id="TIGR01261">
    <property type="entry name" value="hisB_Nterm"/>
    <property type="match status" value="1"/>
</dbReference>
<dbReference type="NCBIfam" id="TIGR01656">
    <property type="entry name" value="Histidinol-ppas"/>
    <property type="match status" value="1"/>
</dbReference>
<dbReference type="NCBIfam" id="NF002111">
    <property type="entry name" value="PRK00951.2-1"/>
    <property type="match status" value="1"/>
</dbReference>
<dbReference type="NCBIfam" id="NF002114">
    <property type="entry name" value="PRK00951.2-4"/>
    <property type="match status" value="1"/>
</dbReference>
<dbReference type="NCBIfam" id="NF003937">
    <property type="entry name" value="PRK05446.1"/>
    <property type="match status" value="1"/>
</dbReference>
<dbReference type="PANTHER" id="PTHR23133:SF2">
    <property type="entry name" value="IMIDAZOLEGLYCEROL-PHOSPHATE DEHYDRATASE"/>
    <property type="match status" value="1"/>
</dbReference>
<dbReference type="PANTHER" id="PTHR23133">
    <property type="entry name" value="IMIDAZOLEGLYCEROL-PHOSPHATE DEHYDRATASE HIS7"/>
    <property type="match status" value="1"/>
</dbReference>
<dbReference type="Pfam" id="PF13242">
    <property type="entry name" value="Hydrolase_like"/>
    <property type="match status" value="1"/>
</dbReference>
<dbReference type="Pfam" id="PF00475">
    <property type="entry name" value="IGPD"/>
    <property type="match status" value="1"/>
</dbReference>
<dbReference type="SFLD" id="SFLDG01134">
    <property type="entry name" value="C1.5.5:_Heptose_Bisphosphate_P"/>
    <property type="match status" value="1"/>
</dbReference>
<dbReference type="SFLD" id="SFLDF00028">
    <property type="entry name" value="histidinol-phosphatase"/>
    <property type="match status" value="1"/>
</dbReference>
<dbReference type="SUPFAM" id="SSF56784">
    <property type="entry name" value="HAD-like"/>
    <property type="match status" value="1"/>
</dbReference>
<dbReference type="SUPFAM" id="SSF54211">
    <property type="entry name" value="Ribosomal protein S5 domain 2-like"/>
    <property type="match status" value="2"/>
</dbReference>
<dbReference type="PROSITE" id="PS00954">
    <property type="entry name" value="IGP_DEHYDRATASE_1"/>
    <property type="match status" value="1"/>
</dbReference>
<dbReference type="PROSITE" id="PS00955">
    <property type="entry name" value="IGP_DEHYDRATASE_2"/>
    <property type="match status" value="1"/>
</dbReference>
<sequence>MSQKYLFIDRDGTLISEPPSDFQVDRFDKLAFEPGVIPELLKLQKAGYKLVMITNQDGLGTQSFPQADFDGPHNLMMQIFTSQGVQFDEVLICPHLPADECDCRKPKVKLVERYLAEQAMDRANSYVIGDRATDIQLAENMGITGLRYDRETLNWPMIGEQLTRRDRYAHVVRNTKETQIDVQVWLDREGGSKINTGVGFFDHMLDQIATHGGFRMEINVKGDLYIDDHHTVEDTGLALGEALKIALGDKRGICRFGFVLPMDECLARCALDISGRPHLEYKAEFTYQRVGDLSTEMIEHFFRSLSYTMGVTLHLKTKGKNDHHRVESLFKAFGRTLRQAIRVEGDTLPSSKGVL</sequence>
<reference key="1">
    <citation type="journal article" date="1988" name="J. Mol. Biol.">
        <title>Structure and function of the Salmonella typhimurium and Escherichia coli K-12 histidine operons.</title>
        <authorList>
            <person name="Carlomagno M.S."/>
            <person name="Chiariotti L."/>
            <person name="Alifano P."/>
            <person name="Nappo A.G."/>
            <person name="Bruni C.B."/>
        </authorList>
    </citation>
    <scope>NUCLEOTIDE SEQUENCE [GENOMIC DNA]</scope>
    <source>
        <strain>K12</strain>
    </source>
</reference>
<reference key="2">
    <citation type="journal article" date="1986" name="Mol. Gen. Genet.">
        <title>Gene structure in the histidine operon of Escherichia coli. Identification and nucleotide sequence of the hisB gene.</title>
        <authorList>
            <person name="Chiariotti L."/>
            <person name="Nappo A.G."/>
            <person name="Carlomagno M.S."/>
            <person name="Bruni C.B."/>
        </authorList>
    </citation>
    <scope>NUCLEOTIDE SEQUENCE [GENOMIC DNA]</scope>
</reference>
<reference key="3">
    <citation type="journal article" date="1996" name="DNA Res.">
        <title>A 460-kb DNA sequence of the Escherichia coli K-12 genome corresponding to the 40.1-50.0 min region on the linkage map.</title>
        <authorList>
            <person name="Itoh T."/>
            <person name="Aiba H."/>
            <person name="Baba T."/>
            <person name="Fujita K."/>
            <person name="Hayashi K."/>
            <person name="Inada T."/>
            <person name="Isono K."/>
            <person name="Kasai H."/>
            <person name="Kimura S."/>
            <person name="Kitakawa M."/>
            <person name="Kitagawa M."/>
            <person name="Makino K."/>
            <person name="Miki T."/>
            <person name="Mizobuchi K."/>
            <person name="Mori H."/>
            <person name="Mori T."/>
            <person name="Motomura K."/>
            <person name="Nakade S."/>
            <person name="Nakamura Y."/>
            <person name="Nashimoto H."/>
            <person name="Nishio Y."/>
            <person name="Oshima T."/>
            <person name="Saito N."/>
            <person name="Sampei G."/>
            <person name="Seki Y."/>
            <person name="Sivasundaram S."/>
            <person name="Tagami H."/>
            <person name="Takeda J."/>
            <person name="Takemoto K."/>
            <person name="Wada C."/>
            <person name="Yamamoto Y."/>
            <person name="Horiuchi T."/>
        </authorList>
    </citation>
    <scope>NUCLEOTIDE SEQUENCE [LARGE SCALE GENOMIC DNA]</scope>
    <source>
        <strain>K12 / W3110 / ATCC 27325 / DSM 5911</strain>
    </source>
</reference>
<reference key="4">
    <citation type="journal article" date="1997" name="Science">
        <title>The complete genome sequence of Escherichia coli K-12.</title>
        <authorList>
            <person name="Blattner F.R."/>
            <person name="Plunkett G. III"/>
            <person name="Bloch C.A."/>
            <person name="Perna N.T."/>
            <person name="Burland V."/>
            <person name="Riley M."/>
            <person name="Collado-Vides J."/>
            <person name="Glasner J.D."/>
            <person name="Rode C.K."/>
            <person name="Mayhew G.F."/>
            <person name="Gregor J."/>
            <person name="Davis N.W."/>
            <person name="Kirkpatrick H.A."/>
            <person name="Goeden M.A."/>
            <person name="Rose D.J."/>
            <person name="Mau B."/>
            <person name="Shao Y."/>
        </authorList>
    </citation>
    <scope>NUCLEOTIDE SEQUENCE [LARGE SCALE GENOMIC DNA]</scope>
    <source>
        <strain>K12 / MG1655 / ATCC 47076</strain>
    </source>
</reference>
<reference key="5">
    <citation type="journal article" date="2006" name="Mol. Syst. Biol.">
        <title>Highly accurate genome sequences of Escherichia coli K-12 strains MG1655 and W3110.</title>
        <authorList>
            <person name="Hayashi K."/>
            <person name="Morooka N."/>
            <person name="Yamamoto Y."/>
            <person name="Fujita K."/>
            <person name="Isono K."/>
            <person name="Choi S."/>
            <person name="Ohtsubo E."/>
            <person name="Baba T."/>
            <person name="Wanner B.L."/>
            <person name="Mori H."/>
            <person name="Horiuchi T."/>
        </authorList>
    </citation>
    <scope>NUCLEOTIDE SEQUENCE [LARGE SCALE GENOMIC DNA]</scope>
    <source>
        <strain>K12 / W3110 / ATCC 27325 / DSM 5911</strain>
    </source>
</reference>
<organism>
    <name type="scientific">Escherichia coli (strain K12)</name>
    <dbReference type="NCBI Taxonomy" id="83333"/>
    <lineage>
        <taxon>Bacteria</taxon>
        <taxon>Pseudomonadati</taxon>
        <taxon>Pseudomonadota</taxon>
        <taxon>Gammaproteobacteria</taxon>
        <taxon>Enterobacterales</taxon>
        <taxon>Enterobacteriaceae</taxon>
        <taxon>Escherichia</taxon>
    </lineage>
</organism>
<keyword id="KW-0028">Amino-acid biosynthesis</keyword>
<keyword id="KW-0963">Cytoplasm</keyword>
<keyword id="KW-0368">Histidine biosynthesis</keyword>
<keyword id="KW-0378">Hydrolase</keyword>
<keyword id="KW-0456">Lyase</keyword>
<keyword id="KW-0460">Magnesium</keyword>
<keyword id="KW-0479">Metal-binding</keyword>
<keyword id="KW-0511">Multifunctional enzyme</keyword>
<keyword id="KW-1185">Reference proteome</keyword>
<keyword id="KW-0862">Zinc</keyword>
<feature type="chain" id="PRO_0000158206" description="Histidine biosynthesis bifunctional protein HisB">
    <location>
        <begin position="1"/>
        <end position="355"/>
    </location>
</feature>
<feature type="region of interest" description="Histidinol-phosphatase" evidence="1">
    <location>
        <begin position="1"/>
        <end position="166"/>
    </location>
</feature>
<feature type="region of interest" description="Imidazoleglycerol-phosphate dehydratase" evidence="1">
    <location>
        <begin position="167"/>
        <end position="355"/>
    </location>
</feature>
<feature type="active site" description="Nucleophile" evidence="1">
    <location>
        <position position="9"/>
    </location>
</feature>
<feature type="active site" description="Proton donor" evidence="1">
    <location>
        <position position="11"/>
    </location>
</feature>
<feature type="binding site" evidence="1">
    <location>
        <position position="9"/>
    </location>
    <ligand>
        <name>Mg(2+)</name>
        <dbReference type="ChEBI" id="CHEBI:18420"/>
    </ligand>
</feature>
<feature type="binding site" evidence="1">
    <location>
        <position position="11"/>
    </location>
    <ligand>
        <name>Mg(2+)</name>
        <dbReference type="ChEBI" id="CHEBI:18420"/>
    </ligand>
</feature>
<feature type="binding site" evidence="1">
    <location>
        <position position="93"/>
    </location>
    <ligand>
        <name>Zn(2+)</name>
        <dbReference type="ChEBI" id="CHEBI:29105"/>
    </ligand>
</feature>
<feature type="binding site" evidence="1">
    <location>
        <position position="95"/>
    </location>
    <ligand>
        <name>Zn(2+)</name>
        <dbReference type="ChEBI" id="CHEBI:29105"/>
    </ligand>
</feature>
<feature type="binding site" evidence="1">
    <location>
        <position position="101"/>
    </location>
    <ligand>
        <name>Zn(2+)</name>
        <dbReference type="ChEBI" id="CHEBI:29105"/>
    </ligand>
</feature>
<feature type="binding site" evidence="1">
    <location>
        <position position="103"/>
    </location>
    <ligand>
        <name>Zn(2+)</name>
        <dbReference type="ChEBI" id="CHEBI:29105"/>
    </ligand>
</feature>
<feature type="binding site" evidence="1">
    <location>
        <position position="130"/>
    </location>
    <ligand>
        <name>Mg(2+)</name>
        <dbReference type="ChEBI" id="CHEBI:18420"/>
    </ligand>
</feature>
<name>HIS7_ECOLI</name>
<proteinExistence type="evidence at protein level"/>
<accession>P06987</accession>
<accession>P78077</accession>
<protein>
    <recommendedName>
        <fullName evidence="1">Histidine biosynthesis bifunctional protein HisB</fullName>
    </recommendedName>
    <domain>
        <recommendedName>
            <fullName evidence="1">Histidinol-phosphatase</fullName>
            <ecNumber evidence="1">3.1.3.15</ecNumber>
        </recommendedName>
    </domain>
    <domain>
        <recommendedName>
            <fullName evidence="1">Imidazoleglycerol-phosphate dehydratase</fullName>
            <shortName evidence="1">IGPD</shortName>
            <ecNumber evidence="1">4.2.1.19</ecNumber>
        </recommendedName>
    </domain>
</protein>